<sequence length="644" mass="72406">MFQDNPLLAQLKQQLHSQTPRAEGVVKATEKGFGFLEVDAQKSYFIPPPQMKKVMHGDRIVAVIHTEKERESAEPEELIEPFLTRFVGKVQGKNDRLSIVPDHPLLKDAIPCRAARGVQHEFKEGDWAVAEMRRHPLKGDRSFYADLTQYITFADDHFVPWWVTLARHNLEKEAPNGVATEMLDEGLERQDLTALNFVTIDSASTEDMDDALYAEELADGRLQLTVAIADPTAWIAEGSKLDNAAKIRAFTNYLPGFNIPMLPRELSDDLCSLRANEVRPALACRMIISADGTIDDDIAFFAATIESKAKLAYDNVSDWLENNGTWQPDNEGIAQQIRLLHRICLSRSEWRHHHALVFKDRPDYRFVLGEKGEVLDIVAEPRRIANRIVEESMIAANLCAARVLRDKLGFGIYNVHTGFDPANADALAALLKTHGLHVDAEEVLTLEGFCKLRRELDAQPSGFLDSRIRRFQSFAEISTEPGPHFGLGLEAYATWTSPIRKYGDMINHRLLKAVIKGEAIARPQEDITQQMAERRRLNRMAERDVGDWLYARFLNDKAGTNTRFAAEIIDVSRGGMRVRLVDNGAIAFIPAPFLHAVHDELVCSQENGTVQIKGETVYKVTDVIDVTIAEVRMETRSIIARPAA</sequence>
<protein>
    <recommendedName>
        <fullName evidence="2">Exoribonuclease 2</fullName>
        <ecNumber evidence="2">3.1.13.1</ecNumber>
    </recommendedName>
    <alternativeName>
        <fullName evidence="2">Exoribonuclease II</fullName>
        <shortName evidence="2">RNase II</shortName>
        <shortName evidence="2">Ribonuclease II</shortName>
    </alternativeName>
</protein>
<comment type="function">
    <text evidence="2">Involved in mRNA degradation. Hydrolyzes single-stranded polyribonucleotides processively in the 3' to 5' direction.</text>
</comment>
<comment type="catalytic activity">
    <reaction evidence="2">
        <text>Exonucleolytic cleavage in the 3'- to 5'-direction to yield nucleoside 5'-phosphates.</text>
        <dbReference type="EC" id="3.1.13.1"/>
    </reaction>
</comment>
<comment type="subcellular location">
    <subcellularLocation>
        <location evidence="2">Cytoplasm</location>
    </subcellularLocation>
</comment>
<comment type="similarity">
    <text evidence="2">Belongs to the RNR ribonuclease family. RNase II subfamily.</text>
</comment>
<accession>B5R9Y0</accession>
<proteinExistence type="inferred from homology"/>
<gene>
    <name evidence="2" type="primary">rnb</name>
    <name type="ordered locus">SG1411</name>
</gene>
<evidence type="ECO:0000255" key="1"/>
<evidence type="ECO:0000255" key="2">
    <source>
        <dbReference type="HAMAP-Rule" id="MF_01036"/>
    </source>
</evidence>
<dbReference type="EC" id="3.1.13.1" evidence="2"/>
<dbReference type="EMBL" id="AM933173">
    <property type="protein sequence ID" value="CAR37284.1"/>
    <property type="molecule type" value="Genomic_DNA"/>
</dbReference>
<dbReference type="RefSeq" id="WP_000485049.1">
    <property type="nucleotide sequence ID" value="NC_011274.1"/>
</dbReference>
<dbReference type="SMR" id="B5R9Y0"/>
<dbReference type="KEGG" id="seg:SG1411"/>
<dbReference type="HOGENOM" id="CLU_002333_7_3_6"/>
<dbReference type="Proteomes" id="UP000008321">
    <property type="component" value="Chromosome"/>
</dbReference>
<dbReference type="GO" id="GO:0005829">
    <property type="term" value="C:cytosol"/>
    <property type="evidence" value="ECO:0007669"/>
    <property type="project" value="UniProtKB-ARBA"/>
</dbReference>
<dbReference type="GO" id="GO:0008859">
    <property type="term" value="F:exoribonuclease II activity"/>
    <property type="evidence" value="ECO:0007669"/>
    <property type="project" value="UniProtKB-UniRule"/>
</dbReference>
<dbReference type="GO" id="GO:0003723">
    <property type="term" value="F:RNA binding"/>
    <property type="evidence" value="ECO:0007669"/>
    <property type="project" value="UniProtKB-KW"/>
</dbReference>
<dbReference type="GO" id="GO:0006402">
    <property type="term" value="P:mRNA catabolic process"/>
    <property type="evidence" value="ECO:0007669"/>
    <property type="project" value="UniProtKB-UniRule"/>
</dbReference>
<dbReference type="FunFam" id="2.40.50.140:FF:000079">
    <property type="entry name" value="Exoribonuclease 2"/>
    <property type="match status" value="1"/>
</dbReference>
<dbReference type="FunFam" id="2.40.50.140:FF:000081">
    <property type="entry name" value="Exoribonuclease 2"/>
    <property type="match status" value="1"/>
</dbReference>
<dbReference type="FunFam" id="2.40.50.640:FF:000001">
    <property type="entry name" value="Exoribonuclease 2"/>
    <property type="match status" value="1"/>
</dbReference>
<dbReference type="Gene3D" id="2.40.50.640">
    <property type="match status" value="1"/>
</dbReference>
<dbReference type="Gene3D" id="2.40.50.140">
    <property type="entry name" value="Nucleic acid-binding proteins"/>
    <property type="match status" value="2"/>
</dbReference>
<dbReference type="HAMAP" id="MF_01036">
    <property type="entry name" value="RNase_II"/>
    <property type="match status" value="1"/>
</dbReference>
<dbReference type="InterPro" id="IPR011129">
    <property type="entry name" value="CSD"/>
</dbReference>
<dbReference type="InterPro" id="IPR012340">
    <property type="entry name" value="NA-bd_OB-fold"/>
</dbReference>
<dbReference type="InterPro" id="IPR013223">
    <property type="entry name" value="RNase_B_OB_dom"/>
</dbReference>
<dbReference type="InterPro" id="IPR011804">
    <property type="entry name" value="RNase_II"/>
</dbReference>
<dbReference type="InterPro" id="IPR001900">
    <property type="entry name" value="RNase_II/R"/>
</dbReference>
<dbReference type="InterPro" id="IPR022966">
    <property type="entry name" value="RNase_II/R_CS"/>
</dbReference>
<dbReference type="InterPro" id="IPR004476">
    <property type="entry name" value="RNase_II/RNase_R"/>
</dbReference>
<dbReference type="InterPro" id="IPR050180">
    <property type="entry name" value="RNR_Ribonuclease"/>
</dbReference>
<dbReference type="InterPro" id="IPR003029">
    <property type="entry name" value="S1_domain"/>
</dbReference>
<dbReference type="NCBIfam" id="TIGR00358">
    <property type="entry name" value="3_prime_RNase"/>
    <property type="match status" value="1"/>
</dbReference>
<dbReference type="NCBIfam" id="NF003455">
    <property type="entry name" value="PRK05054.1"/>
    <property type="match status" value="1"/>
</dbReference>
<dbReference type="NCBIfam" id="TIGR02062">
    <property type="entry name" value="RNase_B"/>
    <property type="match status" value="1"/>
</dbReference>
<dbReference type="PANTHER" id="PTHR23355:SF37">
    <property type="entry name" value="EXORIBONUCLEASE 2"/>
    <property type="match status" value="1"/>
</dbReference>
<dbReference type="PANTHER" id="PTHR23355">
    <property type="entry name" value="RIBONUCLEASE"/>
    <property type="match status" value="1"/>
</dbReference>
<dbReference type="Pfam" id="PF08206">
    <property type="entry name" value="OB_RNB"/>
    <property type="match status" value="1"/>
</dbReference>
<dbReference type="Pfam" id="PF00773">
    <property type="entry name" value="RNB"/>
    <property type="match status" value="1"/>
</dbReference>
<dbReference type="Pfam" id="PF00575">
    <property type="entry name" value="S1"/>
    <property type="match status" value="1"/>
</dbReference>
<dbReference type="SMART" id="SM00357">
    <property type="entry name" value="CSP"/>
    <property type="match status" value="1"/>
</dbReference>
<dbReference type="SMART" id="SM00955">
    <property type="entry name" value="RNB"/>
    <property type="match status" value="1"/>
</dbReference>
<dbReference type="SUPFAM" id="SSF50249">
    <property type="entry name" value="Nucleic acid-binding proteins"/>
    <property type="match status" value="4"/>
</dbReference>
<dbReference type="PROSITE" id="PS01175">
    <property type="entry name" value="RIBONUCLEASE_II"/>
    <property type="match status" value="1"/>
</dbReference>
<keyword id="KW-0963">Cytoplasm</keyword>
<keyword id="KW-0269">Exonuclease</keyword>
<keyword id="KW-0378">Hydrolase</keyword>
<keyword id="KW-0540">Nuclease</keyword>
<keyword id="KW-0694">RNA-binding</keyword>
<reference key="1">
    <citation type="journal article" date="2008" name="Genome Res.">
        <title>Comparative genome analysis of Salmonella enteritidis PT4 and Salmonella gallinarum 287/91 provides insights into evolutionary and host adaptation pathways.</title>
        <authorList>
            <person name="Thomson N.R."/>
            <person name="Clayton D.J."/>
            <person name="Windhorst D."/>
            <person name="Vernikos G."/>
            <person name="Davidson S."/>
            <person name="Churcher C."/>
            <person name="Quail M.A."/>
            <person name="Stevens M."/>
            <person name="Jones M.A."/>
            <person name="Watson M."/>
            <person name="Barron A."/>
            <person name="Layton A."/>
            <person name="Pickard D."/>
            <person name="Kingsley R.A."/>
            <person name="Bignell A."/>
            <person name="Clark L."/>
            <person name="Harris B."/>
            <person name="Ormond D."/>
            <person name="Abdellah Z."/>
            <person name="Brooks K."/>
            <person name="Cherevach I."/>
            <person name="Chillingworth T."/>
            <person name="Woodward J."/>
            <person name="Norberczak H."/>
            <person name="Lord A."/>
            <person name="Arrowsmith C."/>
            <person name="Jagels K."/>
            <person name="Moule S."/>
            <person name="Mungall K."/>
            <person name="Saunders M."/>
            <person name="Whitehead S."/>
            <person name="Chabalgoity J.A."/>
            <person name="Maskell D."/>
            <person name="Humphreys T."/>
            <person name="Roberts M."/>
            <person name="Barrow P.A."/>
            <person name="Dougan G."/>
            <person name="Parkhill J."/>
        </authorList>
    </citation>
    <scope>NUCLEOTIDE SEQUENCE [LARGE SCALE GENOMIC DNA]</scope>
    <source>
        <strain>287/91 / NCTC 13346</strain>
    </source>
</reference>
<organism>
    <name type="scientific">Salmonella gallinarum (strain 287/91 / NCTC 13346)</name>
    <dbReference type="NCBI Taxonomy" id="550538"/>
    <lineage>
        <taxon>Bacteria</taxon>
        <taxon>Pseudomonadati</taxon>
        <taxon>Pseudomonadota</taxon>
        <taxon>Gammaproteobacteria</taxon>
        <taxon>Enterobacterales</taxon>
        <taxon>Enterobacteriaceae</taxon>
        <taxon>Salmonella</taxon>
    </lineage>
</organism>
<feature type="chain" id="PRO_1000135876" description="Exoribonuclease 2">
    <location>
        <begin position="1"/>
        <end position="644"/>
    </location>
</feature>
<feature type="domain" description="RNB" evidence="1">
    <location>
        <begin position="189"/>
        <end position="516"/>
    </location>
</feature>
<feature type="domain" description="S1 motif" evidence="2">
    <location>
        <begin position="561"/>
        <end position="643"/>
    </location>
</feature>
<name>RNB_SALG2</name>